<proteinExistence type="inferred from homology"/>
<comment type="function">
    <text evidence="1">Transaldolase is important for the balance of metabolites in the pentose-phosphate pathway.</text>
</comment>
<comment type="catalytic activity">
    <reaction>
        <text>D-sedoheptulose 7-phosphate + D-glyceraldehyde 3-phosphate = D-erythrose 4-phosphate + beta-D-fructose 6-phosphate</text>
        <dbReference type="Rhea" id="RHEA:17053"/>
        <dbReference type="ChEBI" id="CHEBI:16897"/>
        <dbReference type="ChEBI" id="CHEBI:57483"/>
        <dbReference type="ChEBI" id="CHEBI:57634"/>
        <dbReference type="ChEBI" id="CHEBI:59776"/>
        <dbReference type="EC" id="2.2.1.2"/>
    </reaction>
</comment>
<comment type="pathway">
    <text>Carbohydrate degradation; pentose phosphate pathway; D-glyceraldehyde 3-phosphate and beta-D-fructose 6-phosphate from D-ribose 5-phosphate and D-xylulose 5-phosphate (non-oxidative stage): step 2/3.</text>
</comment>
<comment type="subcellular location">
    <subcellularLocation>
        <location evidence="1">Cytoplasm</location>
    </subcellularLocation>
</comment>
<comment type="similarity">
    <text evidence="2">Belongs to the transaldolase family. Type 3B subfamily.</text>
</comment>
<keyword id="KW-0963">Cytoplasm</keyword>
<keyword id="KW-0570">Pentose shunt</keyword>
<keyword id="KW-0704">Schiff base</keyword>
<keyword id="KW-0808">Transferase</keyword>
<reference key="1">
    <citation type="journal article" date="2000" name="DNA Res.">
        <title>Complete genome structure of the nitrogen-fixing symbiotic bacterium Mesorhizobium loti.</title>
        <authorList>
            <person name="Kaneko T."/>
            <person name="Nakamura Y."/>
            <person name="Sato S."/>
            <person name="Asamizu E."/>
            <person name="Kato T."/>
            <person name="Sasamoto S."/>
            <person name="Watanabe A."/>
            <person name="Idesawa K."/>
            <person name="Ishikawa A."/>
            <person name="Kawashima K."/>
            <person name="Kimura T."/>
            <person name="Kishida Y."/>
            <person name="Kiyokawa C."/>
            <person name="Kohara M."/>
            <person name="Matsumoto M."/>
            <person name="Matsuno A."/>
            <person name="Mochizuki Y."/>
            <person name="Nakayama S."/>
            <person name="Nakazaki N."/>
            <person name="Shimpo S."/>
            <person name="Sugimoto M."/>
            <person name="Takeuchi C."/>
            <person name="Yamada M."/>
            <person name="Tabata S."/>
        </authorList>
    </citation>
    <scope>NUCLEOTIDE SEQUENCE [LARGE SCALE GENOMIC DNA]</scope>
    <source>
        <strain>LMG 29417 / CECT 9101 / MAFF 303099</strain>
    </source>
</reference>
<accession>Q98EV0</accession>
<feature type="chain" id="PRO_0000173679" description="Probable transaldolase">
    <location>
        <begin position="1"/>
        <end position="218"/>
    </location>
</feature>
<feature type="active site" description="Schiff-base intermediate with substrate" evidence="1">
    <location>
        <position position="83"/>
    </location>
</feature>
<name>TAL_RHILO</name>
<sequence length="218" mass="23408">MKFFVDTADIKDIRELNDLGLLDGVTTNPSLILKSGGKIADVTKQICDIVQGPVSAEVVATEYKDMMAEAEVLAKIAPNVCIKVPLTLDGLKACKTIRTQMNRMVNVTLCFSANQALLAAKAGASFISPFVGRIDDTGSDGMELIQEIRQIYDNYDYQTEILTASVRTVNHVKQAALIGADVITAPPATLKALVNHPLTDKGLAAFLADWAKTGQKIG</sequence>
<gene>
    <name type="primary">tal</name>
    <name type="ordered locus">mlr4072</name>
</gene>
<dbReference type="EC" id="2.2.1.2"/>
<dbReference type="EMBL" id="BA000012">
    <property type="protein sequence ID" value="BAB50817.1"/>
    <property type="molecule type" value="Genomic_DNA"/>
</dbReference>
<dbReference type="SMR" id="Q98EV0"/>
<dbReference type="KEGG" id="mlo:mlr4072"/>
<dbReference type="eggNOG" id="COG0176">
    <property type="taxonomic scope" value="Bacteria"/>
</dbReference>
<dbReference type="HOGENOM" id="CLU_079764_0_0_5"/>
<dbReference type="UniPathway" id="UPA00115">
    <property type="reaction ID" value="UER00414"/>
</dbReference>
<dbReference type="Proteomes" id="UP000000552">
    <property type="component" value="Chromosome"/>
</dbReference>
<dbReference type="GO" id="GO:0005737">
    <property type="term" value="C:cytoplasm"/>
    <property type="evidence" value="ECO:0007669"/>
    <property type="project" value="UniProtKB-SubCell"/>
</dbReference>
<dbReference type="GO" id="GO:0016832">
    <property type="term" value="F:aldehyde-lyase activity"/>
    <property type="evidence" value="ECO:0007669"/>
    <property type="project" value="InterPro"/>
</dbReference>
<dbReference type="GO" id="GO:0004801">
    <property type="term" value="F:transaldolase activity"/>
    <property type="evidence" value="ECO:0007669"/>
    <property type="project" value="UniProtKB-UniRule"/>
</dbReference>
<dbReference type="GO" id="GO:0005975">
    <property type="term" value="P:carbohydrate metabolic process"/>
    <property type="evidence" value="ECO:0007669"/>
    <property type="project" value="InterPro"/>
</dbReference>
<dbReference type="GO" id="GO:0006098">
    <property type="term" value="P:pentose-phosphate shunt"/>
    <property type="evidence" value="ECO:0007669"/>
    <property type="project" value="UniProtKB-UniRule"/>
</dbReference>
<dbReference type="CDD" id="cd00956">
    <property type="entry name" value="Transaldolase_FSA"/>
    <property type="match status" value="1"/>
</dbReference>
<dbReference type="FunFam" id="3.20.20.70:FF:000018">
    <property type="entry name" value="Probable transaldolase"/>
    <property type="match status" value="1"/>
</dbReference>
<dbReference type="Gene3D" id="3.20.20.70">
    <property type="entry name" value="Aldolase class I"/>
    <property type="match status" value="1"/>
</dbReference>
<dbReference type="HAMAP" id="MF_00494">
    <property type="entry name" value="Transaldolase_3b"/>
    <property type="match status" value="1"/>
</dbReference>
<dbReference type="InterPro" id="IPR013785">
    <property type="entry name" value="Aldolase_TIM"/>
</dbReference>
<dbReference type="InterPro" id="IPR001585">
    <property type="entry name" value="TAL/FSA"/>
</dbReference>
<dbReference type="InterPro" id="IPR022999">
    <property type="entry name" value="Transaldolase_3B"/>
</dbReference>
<dbReference type="InterPro" id="IPR004731">
    <property type="entry name" value="Transaldolase_3B/F6P_aldolase"/>
</dbReference>
<dbReference type="InterPro" id="IPR018225">
    <property type="entry name" value="Transaldolase_AS"/>
</dbReference>
<dbReference type="InterPro" id="IPR033919">
    <property type="entry name" value="TSA/FSA_arc/bac"/>
</dbReference>
<dbReference type="NCBIfam" id="TIGR00875">
    <property type="entry name" value="fsa_talC_mipB"/>
    <property type="match status" value="1"/>
</dbReference>
<dbReference type="PANTHER" id="PTHR10683:SF40">
    <property type="entry name" value="FRUCTOSE-6-PHOSPHATE ALDOLASE 1-RELATED"/>
    <property type="match status" value="1"/>
</dbReference>
<dbReference type="PANTHER" id="PTHR10683">
    <property type="entry name" value="TRANSALDOLASE"/>
    <property type="match status" value="1"/>
</dbReference>
<dbReference type="Pfam" id="PF00923">
    <property type="entry name" value="TAL_FSA"/>
    <property type="match status" value="1"/>
</dbReference>
<dbReference type="SUPFAM" id="SSF51569">
    <property type="entry name" value="Aldolase"/>
    <property type="match status" value="1"/>
</dbReference>
<dbReference type="PROSITE" id="PS01054">
    <property type="entry name" value="TRANSALDOLASE_1"/>
    <property type="match status" value="1"/>
</dbReference>
<dbReference type="PROSITE" id="PS00958">
    <property type="entry name" value="TRANSALDOLASE_2"/>
    <property type="match status" value="1"/>
</dbReference>
<protein>
    <recommendedName>
        <fullName>Probable transaldolase</fullName>
        <ecNumber>2.2.1.2</ecNumber>
    </recommendedName>
</protein>
<evidence type="ECO:0000250" key="1"/>
<evidence type="ECO:0000305" key="2"/>
<organism>
    <name type="scientific">Mesorhizobium japonicum (strain LMG 29417 / CECT 9101 / MAFF 303099)</name>
    <name type="common">Mesorhizobium loti (strain MAFF 303099)</name>
    <dbReference type="NCBI Taxonomy" id="266835"/>
    <lineage>
        <taxon>Bacteria</taxon>
        <taxon>Pseudomonadati</taxon>
        <taxon>Pseudomonadota</taxon>
        <taxon>Alphaproteobacteria</taxon>
        <taxon>Hyphomicrobiales</taxon>
        <taxon>Phyllobacteriaceae</taxon>
        <taxon>Mesorhizobium</taxon>
    </lineage>
</organism>